<keyword id="KW-0066">ATP synthesis</keyword>
<keyword id="KW-0997">Cell inner membrane</keyword>
<keyword id="KW-1003">Cell membrane</keyword>
<keyword id="KW-0138">CF(0)</keyword>
<keyword id="KW-0375">Hydrogen ion transport</keyword>
<keyword id="KW-0406">Ion transport</keyword>
<keyword id="KW-0472">Membrane</keyword>
<keyword id="KW-1185">Reference proteome</keyword>
<keyword id="KW-0812">Transmembrane</keyword>
<keyword id="KW-1133">Transmembrane helix</keyword>
<keyword id="KW-0813">Transport</keyword>
<comment type="function">
    <text evidence="1">Key component of the proton channel; it plays a direct role in the translocation of protons across the membrane.</text>
</comment>
<comment type="subunit">
    <text evidence="1">F-type ATPases have 2 components, CF(1) - the catalytic core - and CF(0) - the membrane proton channel. CF(1) has five subunits: alpha(3), beta(3), gamma(1), delta(1), epsilon(1). CF(0) has three main subunits: a(1), b(2) and c(9-12). The alpha and beta chains form an alternating ring which encloses part of the gamma chain. CF(1) is attached to CF(0) by a central stalk formed by the gamma and epsilon chains, while a peripheral stalk is formed by the delta and b chains.</text>
</comment>
<comment type="subcellular location">
    <subcellularLocation>
        <location evidence="1">Cell inner membrane</location>
        <topology evidence="1">Multi-pass membrane protein</topology>
    </subcellularLocation>
</comment>
<comment type="similarity">
    <text evidence="1">Belongs to the ATPase A chain family.</text>
</comment>
<gene>
    <name evidence="1" type="primary">atpB1</name>
    <name type="ordered locus">HCH_00920</name>
</gene>
<evidence type="ECO:0000255" key="1">
    <source>
        <dbReference type="HAMAP-Rule" id="MF_01393"/>
    </source>
</evidence>
<organism>
    <name type="scientific">Hahella chejuensis (strain KCTC 2396)</name>
    <dbReference type="NCBI Taxonomy" id="349521"/>
    <lineage>
        <taxon>Bacteria</taxon>
        <taxon>Pseudomonadati</taxon>
        <taxon>Pseudomonadota</taxon>
        <taxon>Gammaproteobacteria</taxon>
        <taxon>Oceanospirillales</taxon>
        <taxon>Hahellaceae</taxon>
        <taxon>Hahella</taxon>
    </lineage>
</organism>
<accession>Q2SNG4</accession>
<name>ATP61_HAHCH</name>
<proteinExistence type="inferred from homology"/>
<reference key="1">
    <citation type="journal article" date="2005" name="Nucleic Acids Res.">
        <title>Genomic blueprint of Hahella chejuensis, a marine microbe producing an algicidal agent.</title>
        <authorList>
            <person name="Jeong H."/>
            <person name="Yim J.H."/>
            <person name="Lee C."/>
            <person name="Choi S.-H."/>
            <person name="Park Y.K."/>
            <person name="Yoon S.H."/>
            <person name="Hur C.-G."/>
            <person name="Kang H.-Y."/>
            <person name="Kim D."/>
            <person name="Lee H.H."/>
            <person name="Park K.H."/>
            <person name="Park S.-H."/>
            <person name="Park H.-S."/>
            <person name="Lee H.K."/>
            <person name="Oh T.K."/>
            <person name="Kim J.F."/>
        </authorList>
    </citation>
    <scope>NUCLEOTIDE SEQUENCE [LARGE SCALE GENOMIC DNA]</scope>
    <source>
        <strain>KCTC 2396</strain>
    </source>
</reference>
<protein>
    <recommendedName>
        <fullName evidence="1">ATP synthase subunit a 1</fullName>
    </recommendedName>
    <alternativeName>
        <fullName evidence="1">ATP synthase F0 sector subunit a 1</fullName>
    </alternativeName>
    <alternativeName>
        <fullName evidence="1">F-ATPase subunit 6 1</fullName>
    </alternativeName>
</protein>
<sequence length="234" mass="25332">MNDGVSTPVWLHIGPLEIHETVVTTWLIMLVLVVASILLTRRLSLQPGRLQAMLEGVVLTLESAIANADSRNARRLLPLIGTFWIFLPVANLLGVIPGMHSPTRDLSVTAALALVVFFAVHAYGVRQSGLGYFKHYLSPSPILLPFHIISEFTRTVALAIRLFGNIMSLEMAALLILLVAGFLAPVPILMLHIIEALVQAYIFGMLALIYVAGAMQQTTESPITSSSRSTSGAP</sequence>
<dbReference type="EMBL" id="CP000155">
    <property type="protein sequence ID" value="ABC27810.1"/>
    <property type="molecule type" value="Genomic_DNA"/>
</dbReference>
<dbReference type="RefSeq" id="WP_011394885.1">
    <property type="nucleotide sequence ID" value="NC_007645.1"/>
</dbReference>
<dbReference type="SMR" id="Q2SNG4"/>
<dbReference type="STRING" id="349521.HCH_00920"/>
<dbReference type="KEGG" id="hch:HCH_00920"/>
<dbReference type="eggNOG" id="COG0356">
    <property type="taxonomic scope" value="Bacteria"/>
</dbReference>
<dbReference type="HOGENOM" id="CLU_041018_2_5_6"/>
<dbReference type="OrthoDB" id="9789241at2"/>
<dbReference type="Proteomes" id="UP000000238">
    <property type="component" value="Chromosome"/>
</dbReference>
<dbReference type="GO" id="GO:0005886">
    <property type="term" value="C:plasma membrane"/>
    <property type="evidence" value="ECO:0007669"/>
    <property type="project" value="UniProtKB-SubCell"/>
</dbReference>
<dbReference type="GO" id="GO:0045259">
    <property type="term" value="C:proton-transporting ATP synthase complex"/>
    <property type="evidence" value="ECO:0007669"/>
    <property type="project" value="UniProtKB-KW"/>
</dbReference>
<dbReference type="GO" id="GO:0046933">
    <property type="term" value="F:proton-transporting ATP synthase activity, rotational mechanism"/>
    <property type="evidence" value="ECO:0007669"/>
    <property type="project" value="UniProtKB-UniRule"/>
</dbReference>
<dbReference type="GO" id="GO:0042777">
    <property type="term" value="P:proton motive force-driven plasma membrane ATP synthesis"/>
    <property type="evidence" value="ECO:0007669"/>
    <property type="project" value="TreeGrafter"/>
</dbReference>
<dbReference type="CDD" id="cd00310">
    <property type="entry name" value="ATP-synt_Fo_a_6"/>
    <property type="match status" value="1"/>
</dbReference>
<dbReference type="Gene3D" id="1.20.120.220">
    <property type="entry name" value="ATP synthase, F0 complex, subunit A"/>
    <property type="match status" value="1"/>
</dbReference>
<dbReference type="HAMAP" id="MF_01393">
    <property type="entry name" value="ATP_synth_a_bact"/>
    <property type="match status" value="1"/>
</dbReference>
<dbReference type="InterPro" id="IPR045082">
    <property type="entry name" value="ATP_syn_F0_a_bact/chloroplast"/>
</dbReference>
<dbReference type="InterPro" id="IPR000568">
    <property type="entry name" value="ATP_synth_F0_asu"/>
</dbReference>
<dbReference type="InterPro" id="IPR023011">
    <property type="entry name" value="ATP_synth_F0_asu_AS"/>
</dbReference>
<dbReference type="InterPro" id="IPR035908">
    <property type="entry name" value="F0_ATP_A_sf"/>
</dbReference>
<dbReference type="NCBIfam" id="TIGR01131">
    <property type="entry name" value="ATP_synt_6_or_A"/>
    <property type="match status" value="1"/>
</dbReference>
<dbReference type="NCBIfam" id="NF009954">
    <property type="entry name" value="PRK13420.1"/>
    <property type="match status" value="1"/>
</dbReference>
<dbReference type="PANTHER" id="PTHR42823">
    <property type="entry name" value="ATP SYNTHASE SUBUNIT A, CHLOROPLASTIC"/>
    <property type="match status" value="1"/>
</dbReference>
<dbReference type="PANTHER" id="PTHR42823:SF3">
    <property type="entry name" value="ATP SYNTHASE SUBUNIT A, CHLOROPLASTIC"/>
    <property type="match status" value="1"/>
</dbReference>
<dbReference type="Pfam" id="PF00119">
    <property type="entry name" value="ATP-synt_A"/>
    <property type="match status" value="1"/>
</dbReference>
<dbReference type="PRINTS" id="PR00123">
    <property type="entry name" value="ATPASEA"/>
</dbReference>
<dbReference type="SUPFAM" id="SSF81336">
    <property type="entry name" value="F1F0 ATP synthase subunit A"/>
    <property type="match status" value="1"/>
</dbReference>
<dbReference type="PROSITE" id="PS00449">
    <property type="entry name" value="ATPASE_A"/>
    <property type="match status" value="1"/>
</dbReference>
<feature type="chain" id="PRO_0000362326" description="ATP synthase subunit a 1">
    <location>
        <begin position="1"/>
        <end position="234"/>
    </location>
</feature>
<feature type="transmembrane region" description="Helical" evidence="1">
    <location>
        <begin position="20"/>
        <end position="40"/>
    </location>
</feature>
<feature type="transmembrane region" description="Helical" evidence="1">
    <location>
        <begin position="76"/>
        <end position="96"/>
    </location>
</feature>
<feature type="transmembrane region" description="Helical" evidence="1">
    <location>
        <begin position="105"/>
        <end position="125"/>
    </location>
</feature>
<feature type="transmembrane region" description="Helical" evidence="1">
    <location>
        <begin position="162"/>
        <end position="184"/>
    </location>
</feature>
<feature type="transmembrane region" description="Helical" evidence="1">
    <location>
        <begin position="195"/>
        <end position="215"/>
    </location>
</feature>